<proteinExistence type="inferred from homology"/>
<gene>
    <name evidence="1" type="primary">dsbB</name>
    <name type="ordered locus">VV1_2231</name>
</gene>
<dbReference type="EMBL" id="AE016795">
    <property type="protein sequence ID" value="AAO10611.2"/>
    <property type="molecule type" value="Genomic_DNA"/>
</dbReference>
<dbReference type="RefSeq" id="WP_011080103.1">
    <property type="nucleotide sequence ID" value="NC_004459.3"/>
</dbReference>
<dbReference type="SMR" id="P59347"/>
<dbReference type="KEGG" id="vvu:VV1_2231"/>
<dbReference type="HOGENOM" id="CLU_098660_2_0_6"/>
<dbReference type="Proteomes" id="UP000002275">
    <property type="component" value="Chromosome 1"/>
</dbReference>
<dbReference type="GO" id="GO:0005886">
    <property type="term" value="C:plasma membrane"/>
    <property type="evidence" value="ECO:0007669"/>
    <property type="project" value="UniProtKB-SubCell"/>
</dbReference>
<dbReference type="GO" id="GO:0009055">
    <property type="term" value="F:electron transfer activity"/>
    <property type="evidence" value="ECO:0007669"/>
    <property type="project" value="UniProtKB-UniRule"/>
</dbReference>
<dbReference type="GO" id="GO:0015035">
    <property type="term" value="F:protein-disulfide reductase activity"/>
    <property type="evidence" value="ECO:0007669"/>
    <property type="project" value="UniProtKB-UniRule"/>
</dbReference>
<dbReference type="GO" id="GO:0006457">
    <property type="term" value="P:protein folding"/>
    <property type="evidence" value="ECO:0007669"/>
    <property type="project" value="InterPro"/>
</dbReference>
<dbReference type="Gene3D" id="1.20.1550.10">
    <property type="entry name" value="DsbB-like"/>
    <property type="match status" value="1"/>
</dbReference>
<dbReference type="HAMAP" id="MF_00286">
    <property type="entry name" value="DsbB"/>
    <property type="match status" value="1"/>
</dbReference>
<dbReference type="InterPro" id="IPR003752">
    <property type="entry name" value="DiS_bond_form_DsbB/BdbC"/>
</dbReference>
<dbReference type="InterPro" id="IPR022920">
    <property type="entry name" value="Disulphide_bond_form_DsbB"/>
</dbReference>
<dbReference type="InterPro" id="IPR050183">
    <property type="entry name" value="DsbB"/>
</dbReference>
<dbReference type="InterPro" id="IPR023380">
    <property type="entry name" value="DsbB-like_sf"/>
</dbReference>
<dbReference type="NCBIfam" id="NF002485">
    <property type="entry name" value="PRK01749.1"/>
    <property type="match status" value="1"/>
</dbReference>
<dbReference type="PANTHER" id="PTHR36570">
    <property type="entry name" value="DISULFIDE BOND FORMATION PROTEIN B"/>
    <property type="match status" value="1"/>
</dbReference>
<dbReference type="PANTHER" id="PTHR36570:SF2">
    <property type="entry name" value="DISULFIDE BOND FORMATION PROTEIN B"/>
    <property type="match status" value="1"/>
</dbReference>
<dbReference type="Pfam" id="PF02600">
    <property type="entry name" value="DsbB"/>
    <property type="match status" value="1"/>
</dbReference>
<dbReference type="SUPFAM" id="SSF158442">
    <property type="entry name" value="DsbB-like"/>
    <property type="match status" value="1"/>
</dbReference>
<protein>
    <recommendedName>
        <fullName evidence="1">Disulfide bond formation protein B</fullName>
    </recommendedName>
    <alternativeName>
        <fullName evidence="1">Disulfide oxidoreductase</fullName>
    </alternativeName>
</protein>
<feature type="chain" id="PRO_0000059363" description="Disulfide bond formation protein B">
    <location>
        <begin position="1"/>
        <end position="172"/>
    </location>
</feature>
<feature type="topological domain" description="Cytoplasmic" evidence="1">
    <location>
        <begin position="1"/>
        <end position="16"/>
    </location>
</feature>
<feature type="transmembrane region" description="Helical" evidence="1">
    <location>
        <begin position="17"/>
        <end position="33"/>
    </location>
</feature>
<feature type="topological domain" description="Periplasmic" evidence="1">
    <location>
        <begin position="34"/>
        <end position="51"/>
    </location>
</feature>
<feature type="transmembrane region" description="Helical" evidence="1">
    <location>
        <begin position="52"/>
        <end position="67"/>
    </location>
</feature>
<feature type="topological domain" description="Cytoplasmic" evidence="1">
    <location>
        <begin position="68"/>
        <end position="74"/>
    </location>
</feature>
<feature type="transmembrane region" description="Helical" evidence="1">
    <location>
        <begin position="75"/>
        <end position="92"/>
    </location>
</feature>
<feature type="topological domain" description="Periplasmic" evidence="1">
    <location>
        <begin position="93"/>
        <end position="147"/>
    </location>
</feature>
<feature type="transmembrane region" description="Helical" evidence="1">
    <location>
        <begin position="148"/>
        <end position="166"/>
    </location>
</feature>
<feature type="topological domain" description="Cytoplasmic" evidence="1">
    <location>
        <begin position="167"/>
        <end position="172"/>
    </location>
</feature>
<feature type="disulfide bond" description="Redox-active" evidence="1">
    <location>
        <begin position="43"/>
        <end position="46"/>
    </location>
</feature>
<feature type="disulfide bond" description="Redox-active" evidence="1">
    <location>
        <begin position="107"/>
        <end position="133"/>
    </location>
</feature>
<accession>P59347</accession>
<reference key="1">
    <citation type="submission" date="2002-12" db="EMBL/GenBank/DDBJ databases">
        <title>Complete genome sequence of Vibrio vulnificus CMCP6.</title>
        <authorList>
            <person name="Rhee J.H."/>
            <person name="Kim S.Y."/>
            <person name="Chung S.S."/>
            <person name="Kim J.J."/>
            <person name="Moon Y.H."/>
            <person name="Jeong H."/>
            <person name="Choy H.E."/>
        </authorList>
    </citation>
    <scope>NUCLEOTIDE SEQUENCE [LARGE SCALE GENOMIC DNA]</scope>
    <source>
        <strain>CMCP6</strain>
    </source>
</reference>
<comment type="function">
    <text evidence="1">Required for disulfide bond formation in some periplasmic proteins. Acts by oxidizing the DsbA protein.</text>
</comment>
<comment type="subcellular location">
    <subcellularLocation>
        <location evidence="1">Cell inner membrane</location>
        <topology evidence="1">Multi-pass membrane protein</topology>
    </subcellularLocation>
</comment>
<comment type="similarity">
    <text evidence="1">Belongs to the DsbB family.</text>
</comment>
<keyword id="KW-0997">Cell inner membrane</keyword>
<keyword id="KW-1003">Cell membrane</keyword>
<keyword id="KW-0143">Chaperone</keyword>
<keyword id="KW-1015">Disulfide bond</keyword>
<keyword id="KW-0249">Electron transport</keyword>
<keyword id="KW-0472">Membrane</keyword>
<keyword id="KW-0560">Oxidoreductase</keyword>
<keyword id="KW-0676">Redox-active center</keyword>
<keyword id="KW-0812">Transmembrane</keyword>
<keyword id="KW-1133">Transmembrane helix</keyword>
<keyword id="KW-0813">Transport</keyword>
<evidence type="ECO:0000255" key="1">
    <source>
        <dbReference type="HAMAP-Rule" id="MF_00286"/>
    </source>
</evidence>
<name>DSBB_VIBVU</name>
<organism>
    <name type="scientific">Vibrio vulnificus (strain CMCP6)</name>
    <dbReference type="NCBI Taxonomy" id="216895"/>
    <lineage>
        <taxon>Bacteria</taxon>
        <taxon>Pseudomonadati</taxon>
        <taxon>Pseudomonadota</taxon>
        <taxon>Gammaproteobacteria</taxon>
        <taxon>Vibrionales</taxon>
        <taxon>Vibrionaceae</taxon>
        <taxon>Vibrio</taxon>
    </lineage>
</organism>
<sequence length="172" mass="19391">MNLFASLNQFSKNRISWLLLLLFVVFFEGAALFFQHVMMLSPCVMCIYERVAMLGVGGAALFGLIAPNNPLVRWLGLAAWGASAYKGLALSLQHVDYQFNPSPFATCDLFVTFPDWAPLNQWAPWMFEAYGDCSKIVWQFMTLSMPQWLVIIFAGNLVALAFIVIAQFFKSK</sequence>